<proteinExistence type="inferred from homology"/>
<keyword id="KW-0067">ATP-binding</keyword>
<keyword id="KW-0963">Cytoplasm</keyword>
<keyword id="KW-0227">DNA damage</keyword>
<keyword id="KW-0233">DNA recombination</keyword>
<keyword id="KW-0234">DNA repair</keyword>
<keyword id="KW-0238">DNA-binding</keyword>
<keyword id="KW-0547">Nucleotide-binding</keyword>
<keyword id="KW-1185">Reference proteome</keyword>
<keyword id="KW-0742">SOS response</keyword>
<gene>
    <name evidence="1" type="primary">recA</name>
    <name type="ordered locus">Ssed_1300</name>
</gene>
<evidence type="ECO:0000255" key="1">
    <source>
        <dbReference type="HAMAP-Rule" id="MF_00268"/>
    </source>
</evidence>
<protein>
    <recommendedName>
        <fullName evidence="1">Protein RecA</fullName>
    </recommendedName>
    <alternativeName>
        <fullName evidence="1">Recombinase A</fullName>
    </alternativeName>
</protein>
<reference key="1">
    <citation type="submission" date="2007-08" db="EMBL/GenBank/DDBJ databases">
        <title>Complete sequence of Shewanella sediminis HAW-EB3.</title>
        <authorList>
            <consortium name="US DOE Joint Genome Institute"/>
            <person name="Copeland A."/>
            <person name="Lucas S."/>
            <person name="Lapidus A."/>
            <person name="Barry K."/>
            <person name="Glavina del Rio T."/>
            <person name="Dalin E."/>
            <person name="Tice H."/>
            <person name="Pitluck S."/>
            <person name="Chertkov O."/>
            <person name="Brettin T."/>
            <person name="Bruce D."/>
            <person name="Detter J.C."/>
            <person name="Han C."/>
            <person name="Schmutz J."/>
            <person name="Larimer F."/>
            <person name="Land M."/>
            <person name="Hauser L."/>
            <person name="Kyrpides N."/>
            <person name="Kim E."/>
            <person name="Zhao J.-S."/>
            <person name="Richardson P."/>
        </authorList>
    </citation>
    <scope>NUCLEOTIDE SEQUENCE [LARGE SCALE GENOMIC DNA]</scope>
    <source>
        <strain>HAW-EB3</strain>
    </source>
</reference>
<comment type="function">
    <text evidence="1">Can catalyze the hydrolysis of ATP in the presence of single-stranded DNA, the ATP-dependent uptake of single-stranded DNA by duplex DNA, and the ATP-dependent hybridization of homologous single-stranded DNAs. It interacts with LexA causing its activation and leading to its autocatalytic cleavage.</text>
</comment>
<comment type="subcellular location">
    <subcellularLocation>
        <location evidence="1">Cytoplasm</location>
    </subcellularLocation>
</comment>
<comment type="similarity">
    <text evidence="1">Belongs to the RecA family.</text>
</comment>
<dbReference type="EMBL" id="CP000821">
    <property type="protein sequence ID" value="ABV35911.1"/>
    <property type="molecule type" value="Genomic_DNA"/>
</dbReference>
<dbReference type="RefSeq" id="WP_012141647.1">
    <property type="nucleotide sequence ID" value="NC_009831.1"/>
</dbReference>
<dbReference type="SMR" id="A8FST8"/>
<dbReference type="STRING" id="425104.Ssed_1300"/>
<dbReference type="KEGG" id="sse:Ssed_1300"/>
<dbReference type="eggNOG" id="COG0468">
    <property type="taxonomic scope" value="Bacteria"/>
</dbReference>
<dbReference type="HOGENOM" id="CLU_040469_3_2_6"/>
<dbReference type="OrthoDB" id="9776733at2"/>
<dbReference type="Proteomes" id="UP000002015">
    <property type="component" value="Chromosome"/>
</dbReference>
<dbReference type="GO" id="GO:0005829">
    <property type="term" value="C:cytosol"/>
    <property type="evidence" value="ECO:0007669"/>
    <property type="project" value="TreeGrafter"/>
</dbReference>
<dbReference type="GO" id="GO:0005524">
    <property type="term" value="F:ATP binding"/>
    <property type="evidence" value="ECO:0007669"/>
    <property type="project" value="UniProtKB-UniRule"/>
</dbReference>
<dbReference type="GO" id="GO:0016887">
    <property type="term" value="F:ATP hydrolysis activity"/>
    <property type="evidence" value="ECO:0007669"/>
    <property type="project" value="InterPro"/>
</dbReference>
<dbReference type="GO" id="GO:0140664">
    <property type="term" value="F:ATP-dependent DNA damage sensor activity"/>
    <property type="evidence" value="ECO:0007669"/>
    <property type="project" value="InterPro"/>
</dbReference>
<dbReference type="GO" id="GO:0003684">
    <property type="term" value="F:damaged DNA binding"/>
    <property type="evidence" value="ECO:0007669"/>
    <property type="project" value="UniProtKB-UniRule"/>
</dbReference>
<dbReference type="GO" id="GO:0003697">
    <property type="term" value="F:single-stranded DNA binding"/>
    <property type="evidence" value="ECO:0007669"/>
    <property type="project" value="UniProtKB-UniRule"/>
</dbReference>
<dbReference type="GO" id="GO:0006310">
    <property type="term" value="P:DNA recombination"/>
    <property type="evidence" value="ECO:0007669"/>
    <property type="project" value="UniProtKB-UniRule"/>
</dbReference>
<dbReference type="GO" id="GO:0006281">
    <property type="term" value="P:DNA repair"/>
    <property type="evidence" value="ECO:0007669"/>
    <property type="project" value="UniProtKB-UniRule"/>
</dbReference>
<dbReference type="GO" id="GO:0009432">
    <property type="term" value="P:SOS response"/>
    <property type="evidence" value="ECO:0007669"/>
    <property type="project" value="UniProtKB-UniRule"/>
</dbReference>
<dbReference type="CDD" id="cd00983">
    <property type="entry name" value="RecA"/>
    <property type="match status" value="1"/>
</dbReference>
<dbReference type="FunFam" id="3.40.50.300:FF:000087">
    <property type="entry name" value="Recombinase RecA"/>
    <property type="match status" value="1"/>
</dbReference>
<dbReference type="Gene3D" id="3.40.50.300">
    <property type="entry name" value="P-loop containing nucleotide triphosphate hydrolases"/>
    <property type="match status" value="1"/>
</dbReference>
<dbReference type="HAMAP" id="MF_00268">
    <property type="entry name" value="RecA"/>
    <property type="match status" value="1"/>
</dbReference>
<dbReference type="InterPro" id="IPR003593">
    <property type="entry name" value="AAA+_ATPase"/>
</dbReference>
<dbReference type="InterPro" id="IPR013765">
    <property type="entry name" value="DNA_recomb/repair_RecA"/>
</dbReference>
<dbReference type="InterPro" id="IPR020584">
    <property type="entry name" value="DNA_recomb/repair_RecA_CS"/>
</dbReference>
<dbReference type="InterPro" id="IPR027417">
    <property type="entry name" value="P-loop_NTPase"/>
</dbReference>
<dbReference type="InterPro" id="IPR049261">
    <property type="entry name" value="RecA-like_C"/>
</dbReference>
<dbReference type="InterPro" id="IPR049428">
    <property type="entry name" value="RecA-like_N"/>
</dbReference>
<dbReference type="InterPro" id="IPR020588">
    <property type="entry name" value="RecA_ATP-bd"/>
</dbReference>
<dbReference type="InterPro" id="IPR023400">
    <property type="entry name" value="RecA_C_sf"/>
</dbReference>
<dbReference type="InterPro" id="IPR020587">
    <property type="entry name" value="RecA_monomer-monomer_interface"/>
</dbReference>
<dbReference type="NCBIfam" id="TIGR02012">
    <property type="entry name" value="tigrfam_recA"/>
    <property type="match status" value="1"/>
</dbReference>
<dbReference type="PANTHER" id="PTHR45900:SF1">
    <property type="entry name" value="MITOCHONDRIAL DNA REPAIR PROTEIN RECA HOMOLOG-RELATED"/>
    <property type="match status" value="1"/>
</dbReference>
<dbReference type="PANTHER" id="PTHR45900">
    <property type="entry name" value="RECA"/>
    <property type="match status" value="1"/>
</dbReference>
<dbReference type="Pfam" id="PF00154">
    <property type="entry name" value="RecA"/>
    <property type="match status" value="1"/>
</dbReference>
<dbReference type="Pfam" id="PF21096">
    <property type="entry name" value="RecA_C"/>
    <property type="match status" value="1"/>
</dbReference>
<dbReference type="PRINTS" id="PR00142">
    <property type="entry name" value="RECA"/>
</dbReference>
<dbReference type="SMART" id="SM00382">
    <property type="entry name" value="AAA"/>
    <property type="match status" value="1"/>
</dbReference>
<dbReference type="SUPFAM" id="SSF52540">
    <property type="entry name" value="P-loop containing nucleoside triphosphate hydrolases"/>
    <property type="match status" value="1"/>
</dbReference>
<dbReference type="SUPFAM" id="SSF54752">
    <property type="entry name" value="RecA protein, C-terminal domain"/>
    <property type="match status" value="1"/>
</dbReference>
<dbReference type="PROSITE" id="PS00321">
    <property type="entry name" value="RECA_1"/>
    <property type="match status" value="1"/>
</dbReference>
<dbReference type="PROSITE" id="PS50162">
    <property type="entry name" value="RECA_2"/>
    <property type="match status" value="1"/>
</dbReference>
<dbReference type="PROSITE" id="PS50163">
    <property type="entry name" value="RECA_3"/>
    <property type="match status" value="1"/>
</dbReference>
<name>RECA_SHESH</name>
<organism>
    <name type="scientific">Shewanella sediminis (strain HAW-EB3)</name>
    <dbReference type="NCBI Taxonomy" id="425104"/>
    <lineage>
        <taxon>Bacteria</taxon>
        <taxon>Pseudomonadati</taxon>
        <taxon>Pseudomonadota</taxon>
        <taxon>Gammaproteobacteria</taxon>
        <taxon>Alteromonadales</taxon>
        <taxon>Shewanellaceae</taxon>
        <taxon>Shewanella</taxon>
    </lineage>
</organism>
<feature type="chain" id="PRO_1000078683" description="Protein RecA">
    <location>
        <begin position="1"/>
        <end position="353"/>
    </location>
</feature>
<feature type="binding site" evidence="1">
    <location>
        <begin position="67"/>
        <end position="74"/>
    </location>
    <ligand>
        <name>ATP</name>
        <dbReference type="ChEBI" id="CHEBI:30616"/>
    </ligand>
</feature>
<accession>A8FST8</accession>
<sequence length="353" mass="37636">MKIDANKEKALNAVLGQIEKQFGKGSIMKLGENRSMDVETISTGSLSLDIALGAGGLPMGRIVEIYGPESSGKTTLTLEVIAAAQREGKVCAFIDAEHALDPIYAKKLGVDIDNLLCSQPDTGEQALEICDALTRSGAVDVIVVDSVAALTPKAEIEGEIGDSHMGLAARMMSQAMRKLAGNLKQTNTMLIFINQIRMKIGVMFGNPETTTGGNALKFYASVRLDIRRTGAIKDRDEVIGNETRVKVVKNKIAAPFKQAEFQILYGQGINSTGELVDLGVAHKLVEKAGAWYSYKGDKIGQGRANAGKYLIENPAVAQEIDVALRALLLTPAAPVADSATGDENIDLETGEVF</sequence>